<reference key="1">
    <citation type="journal article" date="2002" name="Nature">
        <title>Complete genome sequence of the model actinomycete Streptomyces coelicolor A3(2).</title>
        <authorList>
            <person name="Bentley S.D."/>
            <person name="Chater K.F."/>
            <person name="Cerdeno-Tarraga A.-M."/>
            <person name="Challis G.L."/>
            <person name="Thomson N.R."/>
            <person name="James K.D."/>
            <person name="Harris D.E."/>
            <person name="Quail M.A."/>
            <person name="Kieser H."/>
            <person name="Harper D."/>
            <person name="Bateman A."/>
            <person name="Brown S."/>
            <person name="Chandra G."/>
            <person name="Chen C.W."/>
            <person name="Collins M."/>
            <person name="Cronin A."/>
            <person name="Fraser A."/>
            <person name="Goble A."/>
            <person name="Hidalgo J."/>
            <person name="Hornsby T."/>
            <person name="Howarth S."/>
            <person name="Huang C.-H."/>
            <person name="Kieser T."/>
            <person name="Larke L."/>
            <person name="Murphy L.D."/>
            <person name="Oliver K."/>
            <person name="O'Neil S."/>
            <person name="Rabbinowitsch E."/>
            <person name="Rajandream M.A."/>
            <person name="Rutherford K.M."/>
            <person name="Rutter S."/>
            <person name="Seeger K."/>
            <person name="Saunders D."/>
            <person name="Sharp S."/>
            <person name="Squares R."/>
            <person name="Squares S."/>
            <person name="Taylor K."/>
            <person name="Warren T."/>
            <person name="Wietzorrek A."/>
            <person name="Woodward J.R."/>
            <person name="Barrell B.G."/>
            <person name="Parkhill J."/>
            <person name="Hopwood D.A."/>
        </authorList>
    </citation>
    <scope>NUCLEOTIDE SEQUENCE [LARGE SCALE GENOMIC DNA]</scope>
    <source>
        <strain>ATCC BAA-471 / A3(2) / M145</strain>
    </source>
</reference>
<name>IF3_STRCO</name>
<evidence type="ECO:0000255" key="1">
    <source>
        <dbReference type="HAMAP-Rule" id="MF_00080"/>
    </source>
</evidence>
<evidence type="ECO:0000256" key="2">
    <source>
        <dbReference type="SAM" id="MobiDB-lite"/>
    </source>
</evidence>
<dbReference type="EMBL" id="AL939109">
    <property type="protein sequence ID" value="CAA20811.1"/>
    <property type="molecule type" value="Genomic_DNA"/>
</dbReference>
<dbReference type="PIR" id="T36835">
    <property type="entry name" value="T36835"/>
</dbReference>
<dbReference type="RefSeq" id="NP_625876.1">
    <property type="nucleotide sequence ID" value="NC_003888.3"/>
</dbReference>
<dbReference type="RefSeq" id="WP_011027874.1">
    <property type="nucleotide sequence ID" value="NZ_VNID01000021.1"/>
</dbReference>
<dbReference type="SMR" id="O88060"/>
<dbReference type="FunCoup" id="O88060">
    <property type="interactions" value="212"/>
</dbReference>
<dbReference type="STRING" id="100226.gene:17759193"/>
<dbReference type="PaxDb" id="100226-SCO1600"/>
<dbReference type="GeneID" id="91387424"/>
<dbReference type="KEGG" id="sco:SCO1600"/>
<dbReference type="PATRIC" id="fig|100226.15.peg.1612"/>
<dbReference type="eggNOG" id="COG0290">
    <property type="taxonomic scope" value="Bacteria"/>
</dbReference>
<dbReference type="HOGENOM" id="CLU_054919_1_2_11"/>
<dbReference type="InParanoid" id="O88060"/>
<dbReference type="OrthoDB" id="9806014at2"/>
<dbReference type="PhylomeDB" id="O88060"/>
<dbReference type="Proteomes" id="UP000001973">
    <property type="component" value="Chromosome"/>
</dbReference>
<dbReference type="GO" id="GO:0005829">
    <property type="term" value="C:cytosol"/>
    <property type="evidence" value="ECO:0000318"/>
    <property type="project" value="GO_Central"/>
</dbReference>
<dbReference type="GO" id="GO:0043022">
    <property type="term" value="F:ribosome binding"/>
    <property type="evidence" value="ECO:0000318"/>
    <property type="project" value="GO_Central"/>
</dbReference>
<dbReference type="GO" id="GO:0003743">
    <property type="term" value="F:translation initiation factor activity"/>
    <property type="evidence" value="ECO:0000318"/>
    <property type="project" value="GO_Central"/>
</dbReference>
<dbReference type="GO" id="GO:0032790">
    <property type="term" value="P:ribosome disassembly"/>
    <property type="evidence" value="ECO:0000318"/>
    <property type="project" value="GO_Central"/>
</dbReference>
<dbReference type="FunFam" id="3.10.20.80:FF:000001">
    <property type="entry name" value="Translation initiation factor IF-3"/>
    <property type="match status" value="1"/>
</dbReference>
<dbReference type="FunFam" id="3.30.110.10:FF:000002">
    <property type="entry name" value="Translation initiation factor IF-3"/>
    <property type="match status" value="1"/>
</dbReference>
<dbReference type="Gene3D" id="3.30.110.10">
    <property type="entry name" value="Translation initiation factor 3 (IF-3), C-terminal domain"/>
    <property type="match status" value="1"/>
</dbReference>
<dbReference type="Gene3D" id="3.10.20.80">
    <property type="entry name" value="Translation initiation factor 3 (IF-3), N-terminal domain"/>
    <property type="match status" value="1"/>
</dbReference>
<dbReference type="HAMAP" id="MF_00080">
    <property type="entry name" value="IF_3"/>
    <property type="match status" value="1"/>
</dbReference>
<dbReference type="InterPro" id="IPR036788">
    <property type="entry name" value="T_IF-3_C_sf"/>
</dbReference>
<dbReference type="InterPro" id="IPR036787">
    <property type="entry name" value="T_IF-3_N_sf"/>
</dbReference>
<dbReference type="InterPro" id="IPR001288">
    <property type="entry name" value="Translation_initiation_fac_3"/>
</dbReference>
<dbReference type="InterPro" id="IPR019815">
    <property type="entry name" value="Translation_initiation_fac_3_C"/>
</dbReference>
<dbReference type="InterPro" id="IPR019814">
    <property type="entry name" value="Translation_initiation_fac_3_N"/>
</dbReference>
<dbReference type="NCBIfam" id="TIGR00168">
    <property type="entry name" value="infC"/>
    <property type="match status" value="1"/>
</dbReference>
<dbReference type="PANTHER" id="PTHR10938">
    <property type="entry name" value="TRANSLATION INITIATION FACTOR IF-3"/>
    <property type="match status" value="1"/>
</dbReference>
<dbReference type="PANTHER" id="PTHR10938:SF0">
    <property type="entry name" value="TRANSLATION INITIATION FACTOR IF-3, MITOCHONDRIAL"/>
    <property type="match status" value="1"/>
</dbReference>
<dbReference type="Pfam" id="PF00707">
    <property type="entry name" value="IF3_C"/>
    <property type="match status" value="1"/>
</dbReference>
<dbReference type="Pfam" id="PF05198">
    <property type="entry name" value="IF3_N"/>
    <property type="match status" value="1"/>
</dbReference>
<dbReference type="SUPFAM" id="SSF55200">
    <property type="entry name" value="Translation initiation factor IF3, C-terminal domain"/>
    <property type="match status" value="1"/>
</dbReference>
<dbReference type="SUPFAM" id="SSF54364">
    <property type="entry name" value="Translation initiation factor IF3, N-terminal domain"/>
    <property type="match status" value="1"/>
</dbReference>
<keyword id="KW-0963">Cytoplasm</keyword>
<keyword id="KW-0396">Initiation factor</keyword>
<keyword id="KW-0648">Protein biosynthesis</keyword>
<keyword id="KW-1185">Reference proteome</keyword>
<proteinExistence type="inferred from homology"/>
<organism>
    <name type="scientific">Streptomyces coelicolor (strain ATCC BAA-471 / A3(2) / M145)</name>
    <dbReference type="NCBI Taxonomy" id="100226"/>
    <lineage>
        <taxon>Bacteria</taxon>
        <taxon>Bacillati</taxon>
        <taxon>Actinomycetota</taxon>
        <taxon>Actinomycetes</taxon>
        <taxon>Kitasatosporales</taxon>
        <taxon>Streptomycetaceae</taxon>
        <taxon>Streptomyces</taxon>
        <taxon>Streptomyces albidoflavus group</taxon>
    </lineage>
</organism>
<accession>O88060</accession>
<gene>
    <name evidence="1" type="primary">infC</name>
    <name type="ordered locus">SCO1600</name>
    <name type="ORF">SCI35.22c</name>
</gene>
<protein>
    <recommendedName>
        <fullName evidence="1">Translation initiation factor IF-3</fullName>
    </recommendedName>
</protein>
<feature type="chain" id="PRO_0000177586" description="Translation initiation factor IF-3">
    <location>
        <begin position="1"/>
        <end position="217"/>
    </location>
</feature>
<feature type="region of interest" description="Disordered" evidence="2">
    <location>
        <begin position="170"/>
        <end position="217"/>
    </location>
</feature>
<feature type="compositionally biased region" description="Basic and acidic residues" evidence="2">
    <location>
        <begin position="172"/>
        <end position="189"/>
    </location>
</feature>
<comment type="function">
    <text evidence="1">IF-3 binds to the 30S ribosomal subunit and shifts the equilibrium between 70S ribosomes and their 50S and 30S subunits in favor of the free subunits, thus enhancing the availability of 30S subunits on which protein synthesis initiation begins.</text>
</comment>
<comment type="subunit">
    <text evidence="1">Monomer.</text>
</comment>
<comment type="subcellular location">
    <subcellularLocation>
        <location evidence="1">Cytoplasm</location>
    </subcellularLocation>
</comment>
<comment type="similarity">
    <text evidence="1">Belongs to the IF-3 family.</text>
</comment>
<sequence>MSAEPRINDRIRVPEVRLVGPSGEQVGIVPLAKALELAQEYDLDLVEVAANARPPVCKLMDYGKFKYESAMKAREARKNQAHTVIKEMKLRPKIDPHDYDTKKGHVVRFLKQGDKVKITIMFRGREQSRPELGYRLLQRLAEDVADLGFVESNPKQDGRNMIMVLGPHKKKTEAMAEARQAQEARKADAKANPGKSQNAAETDDAEAEAPAEAPAEA</sequence>